<reference key="1">
    <citation type="submission" date="2005-08" db="EMBL/GenBank/DDBJ databases">
        <title>Complete sequence of Chlorobium chlorochromatii CaD3.</title>
        <authorList>
            <consortium name="US DOE Joint Genome Institute"/>
            <person name="Copeland A."/>
            <person name="Lucas S."/>
            <person name="Lapidus A."/>
            <person name="Barry K."/>
            <person name="Detter J.C."/>
            <person name="Glavina T."/>
            <person name="Hammon N."/>
            <person name="Israni S."/>
            <person name="Pitluck S."/>
            <person name="Bryant D."/>
            <person name="Schmutz J."/>
            <person name="Larimer F."/>
            <person name="Land M."/>
            <person name="Kyrpides N."/>
            <person name="Ivanova N."/>
            <person name="Richardson P."/>
        </authorList>
    </citation>
    <scope>NUCLEOTIDE SEQUENCE [LARGE SCALE GENOMIC DNA]</scope>
    <source>
        <strain>CaD3</strain>
    </source>
</reference>
<organism>
    <name type="scientific">Chlorobium chlorochromatii (strain CaD3)</name>
    <dbReference type="NCBI Taxonomy" id="340177"/>
    <lineage>
        <taxon>Bacteria</taxon>
        <taxon>Pseudomonadati</taxon>
        <taxon>Chlorobiota</taxon>
        <taxon>Chlorobiia</taxon>
        <taxon>Chlorobiales</taxon>
        <taxon>Chlorobiaceae</taxon>
        <taxon>Chlorobium/Pelodictyon group</taxon>
        <taxon>Chlorobium</taxon>
    </lineage>
</organism>
<proteinExistence type="inferred from homology"/>
<name>DUT_CHLCH</name>
<accession>Q3AQ75</accession>
<protein>
    <recommendedName>
        <fullName evidence="1">Deoxyuridine 5'-triphosphate nucleotidohydrolase</fullName>
        <shortName evidence="1">dUTPase</shortName>
        <ecNumber evidence="1">3.6.1.23</ecNumber>
    </recommendedName>
    <alternativeName>
        <fullName evidence="1">dUTP pyrophosphatase</fullName>
    </alternativeName>
</protein>
<comment type="function">
    <text evidence="1">This enzyme is involved in nucleotide metabolism: it produces dUMP, the immediate precursor of thymidine nucleotides and it decreases the intracellular concentration of dUTP so that uracil cannot be incorporated into DNA.</text>
</comment>
<comment type="catalytic activity">
    <reaction evidence="1">
        <text>dUTP + H2O = dUMP + diphosphate + H(+)</text>
        <dbReference type="Rhea" id="RHEA:10248"/>
        <dbReference type="ChEBI" id="CHEBI:15377"/>
        <dbReference type="ChEBI" id="CHEBI:15378"/>
        <dbReference type="ChEBI" id="CHEBI:33019"/>
        <dbReference type="ChEBI" id="CHEBI:61555"/>
        <dbReference type="ChEBI" id="CHEBI:246422"/>
        <dbReference type="EC" id="3.6.1.23"/>
    </reaction>
</comment>
<comment type="cofactor">
    <cofactor evidence="1">
        <name>Mg(2+)</name>
        <dbReference type="ChEBI" id="CHEBI:18420"/>
    </cofactor>
</comment>
<comment type="pathway">
    <text evidence="1">Pyrimidine metabolism; dUMP biosynthesis; dUMP from dCTP (dUTP route): step 2/2.</text>
</comment>
<comment type="similarity">
    <text evidence="1">Belongs to the dUTPase family.</text>
</comment>
<dbReference type="EC" id="3.6.1.23" evidence="1"/>
<dbReference type="EMBL" id="CP000108">
    <property type="protein sequence ID" value="ABB28850.1"/>
    <property type="molecule type" value="Genomic_DNA"/>
</dbReference>
<dbReference type="SMR" id="Q3AQ75"/>
<dbReference type="STRING" id="340177.Cag_1595"/>
<dbReference type="KEGG" id="cch:Cag_1595"/>
<dbReference type="eggNOG" id="COG0756">
    <property type="taxonomic scope" value="Bacteria"/>
</dbReference>
<dbReference type="HOGENOM" id="CLU_068508_1_2_10"/>
<dbReference type="OrthoDB" id="9809956at2"/>
<dbReference type="UniPathway" id="UPA00610">
    <property type="reaction ID" value="UER00666"/>
</dbReference>
<dbReference type="GO" id="GO:0004170">
    <property type="term" value="F:dUTP diphosphatase activity"/>
    <property type="evidence" value="ECO:0007669"/>
    <property type="project" value="UniProtKB-UniRule"/>
</dbReference>
<dbReference type="GO" id="GO:0000287">
    <property type="term" value="F:magnesium ion binding"/>
    <property type="evidence" value="ECO:0007669"/>
    <property type="project" value="UniProtKB-UniRule"/>
</dbReference>
<dbReference type="GO" id="GO:0006226">
    <property type="term" value="P:dUMP biosynthetic process"/>
    <property type="evidence" value="ECO:0007669"/>
    <property type="project" value="UniProtKB-UniRule"/>
</dbReference>
<dbReference type="GO" id="GO:0046081">
    <property type="term" value="P:dUTP catabolic process"/>
    <property type="evidence" value="ECO:0007669"/>
    <property type="project" value="InterPro"/>
</dbReference>
<dbReference type="CDD" id="cd07557">
    <property type="entry name" value="trimeric_dUTPase"/>
    <property type="match status" value="1"/>
</dbReference>
<dbReference type="FunFam" id="2.70.40.10:FF:000002">
    <property type="entry name" value="dUTP diphosphatase"/>
    <property type="match status" value="1"/>
</dbReference>
<dbReference type="Gene3D" id="2.70.40.10">
    <property type="match status" value="1"/>
</dbReference>
<dbReference type="HAMAP" id="MF_00116">
    <property type="entry name" value="dUTPase_bact"/>
    <property type="match status" value="1"/>
</dbReference>
<dbReference type="InterPro" id="IPR008181">
    <property type="entry name" value="dUTPase"/>
</dbReference>
<dbReference type="InterPro" id="IPR029054">
    <property type="entry name" value="dUTPase-like"/>
</dbReference>
<dbReference type="InterPro" id="IPR036157">
    <property type="entry name" value="dUTPase-like_sf"/>
</dbReference>
<dbReference type="InterPro" id="IPR033704">
    <property type="entry name" value="dUTPase_trimeric"/>
</dbReference>
<dbReference type="NCBIfam" id="TIGR00576">
    <property type="entry name" value="dut"/>
    <property type="match status" value="1"/>
</dbReference>
<dbReference type="NCBIfam" id="NF001862">
    <property type="entry name" value="PRK00601.1"/>
    <property type="match status" value="1"/>
</dbReference>
<dbReference type="PANTHER" id="PTHR11241">
    <property type="entry name" value="DEOXYURIDINE 5'-TRIPHOSPHATE NUCLEOTIDOHYDROLASE"/>
    <property type="match status" value="1"/>
</dbReference>
<dbReference type="PANTHER" id="PTHR11241:SF0">
    <property type="entry name" value="DEOXYURIDINE 5'-TRIPHOSPHATE NUCLEOTIDOHYDROLASE"/>
    <property type="match status" value="1"/>
</dbReference>
<dbReference type="Pfam" id="PF00692">
    <property type="entry name" value="dUTPase"/>
    <property type="match status" value="1"/>
</dbReference>
<dbReference type="SUPFAM" id="SSF51283">
    <property type="entry name" value="dUTPase-like"/>
    <property type="match status" value="1"/>
</dbReference>
<keyword id="KW-0378">Hydrolase</keyword>
<keyword id="KW-0460">Magnesium</keyword>
<keyword id="KW-0479">Metal-binding</keyword>
<keyword id="KW-0546">Nucleotide metabolism</keyword>
<sequence length="149" mass="15895">MLNIKIVRLHPLATLPAYATAHAAGMDVAACLEAPVSVAPFSTALIPTGFALELPIGYEAQLRPRSGLALRSMISLPNTPATIDADYRGEVKVILINYGKEPFMVQHGDRIAQMVIARVEQVQFEEVAELSATVRGEGGFGHTGIASVQ</sequence>
<evidence type="ECO:0000255" key="1">
    <source>
        <dbReference type="HAMAP-Rule" id="MF_00116"/>
    </source>
</evidence>
<feature type="chain" id="PRO_0000231406" description="Deoxyuridine 5'-triphosphate nucleotidohydrolase">
    <location>
        <begin position="1"/>
        <end position="149"/>
    </location>
</feature>
<feature type="binding site" evidence="1">
    <location>
        <begin position="65"/>
        <end position="67"/>
    </location>
    <ligand>
        <name>substrate</name>
    </ligand>
</feature>
<feature type="binding site" evidence="1">
    <location>
        <position position="78"/>
    </location>
    <ligand>
        <name>substrate</name>
    </ligand>
</feature>
<feature type="binding site" evidence="1">
    <location>
        <begin position="82"/>
        <end position="84"/>
    </location>
    <ligand>
        <name>substrate</name>
    </ligand>
</feature>
<feature type="binding site" evidence="1">
    <location>
        <position position="92"/>
    </location>
    <ligand>
        <name>substrate</name>
    </ligand>
</feature>
<gene>
    <name evidence="1" type="primary">dut</name>
    <name type="ordered locus">Cag_1595</name>
</gene>